<keyword id="KW-0002">3D-structure</keyword>
<keyword id="KW-0274">FAD</keyword>
<keyword id="KW-0285">Flavoprotein</keyword>
<keyword id="KW-0547">Nucleotide-binding</keyword>
<keyword id="KW-0560">Oxidoreductase</keyword>
<dbReference type="EC" id="1.14.19.9" evidence="3 5"/>
<dbReference type="EMBL" id="AF534707">
    <property type="protein sequence ID" value="AAN01216.1"/>
    <property type="molecule type" value="Genomic_DNA"/>
</dbReference>
<dbReference type="EMBL" id="AB090952">
    <property type="protein sequence ID" value="BAC10682.1"/>
    <property type="molecule type" value="Genomic_DNA"/>
</dbReference>
<dbReference type="EMBL" id="AB071405">
    <property type="protein sequence ID" value="BAC15758.1"/>
    <property type="molecule type" value="Genomic_DNA"/>
</dbReference>
<dbReference type="EMBL" id="AJ414559">
    <property type="protein sequence ID" value="CAC93722.1"/>
    <property type="molecule type" value="Genomic_DNA"/>
</dbReference>
<dbReference type="PDB" id="2E4G">
    <property type="method" value="X-ray"/>
    <property type="resolution" value="2.08 A"/>
    <property type="chains" value="A/B=1-530"/>
</dbReference>
<dbReference type="PDB" id="2O9Z">
    <property type="method" value="X-ray"/>
    <property type="resolution" value="2.49 A"/>
    <property type="chains" value="A/B=1-530"/>
</dbReference>
<dbReference type="PDB" id="2OA1">
    <property type="method" value="X-ray"/>
    <property type="resolution" value="2.15 A"/>
    <property type="chains" value="A/B=1-530"/>
</dbReference>
<dbReference type="PDB" id="2OAL">
    <property type="method" value="X-ray"/>
    <property type="resolution" value="2.10 A"/>
    <property type="chains" value="A/B=1-530"/>
</dbReference>
<dbReference type="PDB" id="2OAM">
    <property type="method" value="X-ray"/>
    <property type="resolution" value="2.30 A"/>
    <property type="chains" value="A/B=1-530"/>
</dbReference>
<dbReference type="PDB" id="4LU6">
    <property type="method" value="X-ray"/>
    <property type="resolution" value="3.05 A"/>
    <property type="chains" value="A/B=1-530"/>
</dbReference>
<dbReference type="PDB" id="6P00">
    <property type="method" value="X-ray"/>
    <property type="resolution" value="2.25 A"/>
    <property type="chains" value="A/B=1-530"/>
</dbReference>
<dbReference type="PDB" id="6P2V">
    <property type="method" value="X-ray"/>
    <property type="resolution" value="2.55 A"/>
    <property type="chains" value="A/B=1-530"/>
</dbReference>
<dbReference type="PDB" id="7JU0">
    <property type="method" value="X-ray"/>
    <property type="resolution" value="2.60 A"/>
    <property type="chains" value="A/B=1-530"/>
</dbReference>
<dbReference type="PDBsum" id="2E4G"/>
<dbReference type="PDBsum" id="2O9Z"/>
<dbReference type="PDBsum" id="2OA1"/>
<dbReference type="PDBsum" id="2OAL"/>
<dbReference type="PDBsum" id="2OAM"/>
<dbReference type="PDBsum" id="4LU6"/>
<dbReference type="PDBsum" id="6P00"/>
<dbReference type="PDBsum" id="6P2V"/>
<dbReference type="PDBsum" id="7JU0"/>
<dbReference type="SMR" id="Q8KHZ8"/>
<dbReference type="KEGG" id="ag:BAC10682"/>
<dbReference type="BioCyc" id="MetaCyc:MONOMER-15085"/>
<dbReference type="BRENDA" id="1.14.19.9">
    <property type="organism ID" value="4340"/>
</dbReference>
<dbReference type="EvolutionaryTrace" id="Q8KHZ8"/>
<dbReference type="GO" id="GO:0004497">
    <property type="term" value="F:monooxygenase activity"/>
    <property type="evidence" value="ECO:0007669"/>
    <property type="project" value="InterPro"/>
</dbReference>
<dbReference type="GO" id="GO:0000166">
    <property type="term" value="F:nucleotide binding"/>
    <property type="evidence" value="ECO:0007669"/>
    <property type="project" value="UniProtKB-KW"/>
</dbReference>
<dbReference type="Gene3D" id="3.50.50.60">
    <property type="entry name" value="FAD/NAD(P)-binding domain"/>
    <property type="match status" value="1"/>
</dbReference>
<dbReference type="InterPro" id="IPR036188">
    <property type="entry name" value="FAD/NAD-bd_sf"/>
</dbReference>
<dbReference type="InterPro" id="IPR050816">
    <property type="entry name" value="Flavin-dep_Halogenase_NPB"/>
</dbReference>
<dbReference type="InterPro" id="IPR006905">
    <property type="entry name" value="Flavin_halogenase"/>
</dbReference>
<dbReference type="InterPro" id="IPR033856">
    <property type="entry name" value="Trp_halogen"/>
</dbReference>
<dbReference type="PANTHER" id="PTHR43747">
    <property type="entry name" value="FAD-BINDING PROTEIN"/>
    <property type="match status" value="1"/>
</dbReference>
<dbReference type="PANTHER" id="PTHR43747:SF4">
    <property type="entry name" value="FLAVIN-DEPENDENT TRYPTOPHAN HALOGENASE"/>
    <property type="match status" value="1"/>
</dbReference>
<dbReference type="Pfam" id="PF04820">
    <property type="entry name" value="Trp_halogenase"/>
    <property type="match status" value="1"/>
</dbReference>
<dbReference type="PIRSF" id="PIRSF011396">
    <property type="entry name" value="Trp_halogenase"/>
    <property type="match status" value="1"/>
</dbReference>
<dbReference type="SUPFAM" id="SSF51905">
    <property type="entry name" value="FAD/NAD(P)-binding domain"/>
    <property type="match status" value="1"/>
</dbReference>
<sequence length="530" mass="60297">MSGKIDKILIVGGGTAGWMAASYLGKALQGTADITLLQAPDIPTLGVGEATIPNLQTAFFDFLGIPEDEWMRECNASYKVAIKFINWRTAGEGTSEARELDGGPDHFYHSFGLLKYHEQIPLSHYWFDRSYRGKTVEPFDYACYKEPVILDANRSPRRLDGSKVTNYAWHFDAHLVADFLRRFATEKLGVRHVEDRVEHVQRDANGNIESVRTATGRVFDADLFVDCSGFRGLLINKAMEEPFLDMSDHLLNDSAVATQVPHDDDANGVEPFTSAIAMKSGWTWKIPMLGRFGTGYVYSSRFATEDEAVREFCEMWHLDPETQPLNRIRFRVGRNRRAWVGNCVSIGTSSCFVEPLESTGIYFVYAALYQLVKHFPDKSLNPVLTARFNREIETMFDDTRDFIQAHFYFSPRTDTPFWRANKELRLADGMQEKIDMYRAGMAINAPASDDAQLYYGNFEEEFRNFWNNSNYYCVLAGLGLVPDAPSPRLAHMPQATESVDEVFGAVKDRQRNLLETLPSLHEFLRQQHGR</sequence>
<accession>Q8KHZ8</accession>
<gene>
    <name type="primary">rebH</name>
    <name type="synonym">rbmJ</name>
</gene>
<feature type="chain" id="PRO_0000422334" description="Tryptophan 7-halogenase RebH">
    <location>
        <begin position="1"/>
        <end position="530"/>
    </location>
</feature>
<feature type="active site" evidence="5">
    <location>
        <position position="79"/>
    </location>
</feature>
<feature type="binding site" evidence="5 6 12 13">
    <location>
        <position position="13"/>
    </location>
    <ligand>
        <name>FAD</name>
        <dbReference type="ChEBI" id="CHEBI:57692"/>
    </ligand>
</feature>
<feature type="binding site" evidence="5 13">
    <location>
        <position position="15"/>
    </location>
    <ligand>
        <name>FAD</name>
        <dbReference type="ChEBI" id="CHEBI:57692"/>
    </ligand>
</feature>
<feature type="binding site" evidence="5 6 12 13">
    <location>
        <position position="16"/>
    </location>
    <ligand>
        <name>FAD</name>
        <dbReference type="ChEBI" id="CHEBI:57692"/>
    </ligand>
</feature>
<feature type="binding site" evidence="5 6 12 13">
    <location>
        <position position="39"/>
    </location>
    <ligand>
        <name>FAD</name>
        <dbReference type="ChEBI" id="CHEBI:57692"/>
    </ligand>
</feature>
<feature type="binding site" evidence="5 6 12 13">
    <location>
        <position position="41"/>
    </location>
    <ligand>
        <name>FAD</name>
        <dbReference type="ChEBI" id="CHEBI:57692"/>
    </ligand>
</feature>
<feature type="binding site" evidence="5 6 12 13">
    <location>
        <position position="49"/>
    </location>
    <ligand>
        <name>FAD</name>
        <dbReference type="ChEBI" id="CHEBI:57692"/>
    </ligand>
</feature>
<feature type="binding site" evidence="5 6 12 13">
    <location>
        <position position="50"/>
    </location>
    <ligand>
        <name>FAD</name>
        <dbReference type="ChEBI" id="CHEBI:57692"/>
    </ligand>
</feature>
<feature type="binding site" evidence="5 6 12 13">
    <location>
        <position position="197"/>
    </location>
    <ligand>
        <name>FAD</name>
        <dbReference type="ChEBI" id="CHEBI:57692"/>
    </ligand>
</feature>
<feature type="binding site" evidence="5 6 12 13">
    <location>
        <position position="348"/>
    </location>
    <ligand>
        <name>FAD</name>
        <dbReference type="ChEBI" id="CHEBI:57692"/>
    </ligand>
</feature>
<feature type="binding site" evidence="5 6 10 12">
    <location>
        <position position="357"/>
    </location>
    <ligand>
        <name>L-tryptophan</name>
        <dbReference type="ChEBI" id="CHEBI:57912"/>
    </ligand>
</feature>
<feature type="binding site" evidence="6 12">
    <location>
        <position position="359"/>
    </location>
    <ligand>
        <name>chloride</name>
        <dbReference type="ChEBI" id="CHEBI:17996"/>
    </ligand>
</feature>
<feature type="binding site" evidence="6 12">
    <location>
        <position position="360"/>
    </location>
    <ligand>
        <name>chloride</name>
        <dbReference type="ChEBI" id="CHEBI:17996"/>
    </ligand>
</feature>
<feature type="binding site" evidence="5 6 12 13">
    <location>
        <position position="361"/>
    </location>
    <ligand>
        <name>FAD</name>
        <dbReference type="ChEBI" id="CHEBI:57692"/>
    </ligand>
</feature>
<feature type="binding site" evidence="5 6 10 12">
    <location>
        <position position="454"/>
    </location>
    <ligand>
        <name>L-tryptophan</name>
        <dbReference type="ChEBI" id="CHEBI:57912"/>
    </ligand>
</feature>
<feature type="binding site" evidence="5 6 10 12">
    <location>
        <position position="455"/>
    </location>
    <ligand>
        <name>L-tryptophan</name>
        <dbReference type="ChEBI" id="CHEBI:57912"/>
    </ligand>
</feature>
<feature type="binding site" evidence="5 6 10 12">
    <location>
        <position position="461"/>
    </location>
    <ligand>
        <name>L-tryptophan</name>
        <dbReference type="ChEBI" id="CHEBI:57912"/>
    </ligand>
</feature>
<feature type="binding site" evidence="5 6 10 12">
    <location>
        <position position="465"/>
    </location>
    <ligand>
        <name>L-tryptophan</name>
        <dbReference type="ChEBI" id="CHEBI:57912"/>
    </ligand>
</feature>
<feature type="site" description="Important for activity" evidence="1">
    <location>
        <position position="357"/>
    </location>
</feature>
<feature type="mutagenesis site" description="Complete loss of halogenase activity." evidence="5">
    <original>K</original>
    <variation>A</variation>
    <location>
        <position position="79"/>
    </location>
</feature>
<feature type="mutagenesis site" description="Complete loss of halogenase activity." evidence="5">
    <original>K</original>
    <variation>M</variation>
    <location>
        <position position="79"/>
    </location>
</feature>
<feature type="strand" evidence="15">
    <location>
        <begin position="7"/>
        <end position="11"/>
    </location>
</feature>
<feature type="helix" evidence="15">
    <location>
        <begin position="15"/>
        <end position="27"/>
    </location>
</feature>
<feature type="turn" evidence="15">
    <location>
        <begin position="28"/>
        <end position="30"/>
    </location>
</feature>
<feature type="strand" evidence="15">
    <location>
        <begin position="31"/>
        <end position="38"/>
    </location>
</feature>
<feature type="helix" evidence="15">
    <location>
        <begin position="54"/>
        <end position="58"/>
    </location>
</feature>
<feature type="helix" evidence="15">
    <location>
        <begin position="60"/>
        <end position="63"/>
    </location>
</feature>
<feature type="helix" evidence="15">
    <location>
        <begin position="67"/>
        <end position="73"/>
    </location>
</feature>
<feature type="strand" evidence="15">
    <location>
        <begin position="77"/>
        <end position="79"/>
    </location>
</feature>
<feature type="strand" evidence="15">
    <location>
        <begin position="81"/>
        <end position="89"/>
    </location>
</feature>
<feature type="strand" evidence="15">
    <location>
        <begin position="103"/>
        <end position="112"/>
    </location>
</feature>
<feature type="strand" evidence="17">
    <location>
        <begin position="116"/>
        <end position="121"/>
    </location>
</feature>
<feature type="helix" evidence="15">
    <location>
        <begin position="122"/>
        <end position="131"/>
    </location>
</feature>
<feature type="helix" evidence="15">
    <location>
        <begin position="139"/>
        <end position="143"/>
    </location>
</feature>
<feature type="helix" evidence="15">
    <location>
        <begin position="146"/>
        <end position="151"/>
    </location>
</feature>
<feature type="strand" evidence="15">
    <location>
        <begin position="168"/>
        <end position="171"/>
    </location>
</feature>
<feature type="helix" evidence="15">
    <location>
        <begin position="173"/>
        <end position="187"/>
    </location>
</feature>
<feature type="strand" evidence="15">
    <location>
        <begin position="191"/>
        <end position="194"/>
    </location>
</feature>
<feature type="strand" evidence="15">
    <location>
        <begin position="197"/>
        <end position="202"/>
    </location>
</feature>
<feature type="strand" evidence="15">
    <location>
        <begin position="208"/>
        <end position="213"/>
    </location>
</feature>
<feature type="strand" evidence="15">
    <location>
        <begin position="218"/>
        <end position="220"/>
    </location>
</feature>
<feature type="strand" evidence="15">
    <location>
        <begin position="222"/>
        <end position="226"/>
    </location>
</feature>
<feature type="helix" evidence="15">
    <location>
        <begin position="229"/>
        <end position="231"/>
    </location>
</feature>
<feature type="helix" evidence="15">
    <location>
        <begin position="233"/>
        <end position="238"/>
    </location>
</feature>
<feature type="strand" evidence="15">
    <location>
        <begin position="243"/>
        <end position="245"/>
    </location>
</feature>
<feature type="turn" evidence="15">
    <location>
        <begin position="247"/>
        <end position="249"/>
    </location>
</feature>
<feature type="strand" evidence="15">
    <location>
        <begin position="254"/>
        <end position="261"/>
    </location>
</feature>
<feature type="helix" evidence="15">
    <location>
        <begin position="264"/>
        <end position="267"/>
    </location>
</feature>
<feature type="strand" evidence="15">
    <location>
        <begin position="271"/>
        <end position="277"/>
    </location>
</feature>
<feature type="strand" evidence="15">
    <location>
        <begin position="279"/>
        <end position="287"/>
    </location>
</feature>
<feature type="strand" evidence="15">
    <location>
        <begin position="289"/>
        <end position="298"/>
    </location>
</feature>
<feature type="turn" evidence="15">
    <location>
        <begin position="300"/>
        <end position="302"/>
    </location>
</feature>
<feature type="helix" evidence="15">
    <location>
        <begin position="305"/>
        <end position="315"/>
    </location>
</feature>
<feature type="turn" evidence="15">
    <location>
        <begin position="320"/>
        <end position="322"/>
    </location>
</feature>
<feature type="strand" evidence="15">
    <location>
        <begin position="326"/>
        <end position="329"/>
    </location>
</feature>
<feature type="strand" evidence="15">
    <location>
        <begin position="333"/>
        <end position="336"/>
    </location>
</feature>
<feature type="strand" evidence="15">
    <location>
        <begin position="338"/>
        <end position="340"/>
    </location>
</feature>
<feature type="strand" evidence="15">
    <location>
        <begin position="343"/>
        <end position="345"/>
    </location>
</feature>
<feature type="turn" evidence="15">
    <location>
        <begin position="348"/>
        <end position="350"/>
    </location>
</feature>
<feature type="helix" evidence="15">
    <location>
        <begin position="360"/>
        <end position="373"/>
    </location>
</feature>
<feature type="helix" evidence="15">
    <location>
        <begin position="382"/>
        <end position="408"/>
    </location>
</feature>
<feature type="helix" evidence="15">
    <location>
        <begin position="416"/>
        <end position="421"/>
    </location>
</feature>
<feature type="helix" evidence="15">
    <location>
        <begin position="428"/>
        <end position="438"/>
    </location>
</feature>
<feature type="strand" evidence="16">
    <location>
        <begin position="447"/>
        <end position="449"/>
    </location>
</feature>
<feature type="helix" evidence="15">
    <location>
        <begin position="451"/>
        <end position="456"/>
    </location>
</feature>
<feature type="helix" evidence="15">
    <location>
        <begin position="458"/>
        <end position="462"/>
    </location>
</feature>
<feature type="helix" evidence="15">
    <location>
        <begin position="468"/>
        <end position="478"/>
    </location>
</feature>
<feature type="helix" evidence="15">
    <location>
        <begin position="487"/>
        <end position="491"/>
    </location>
</feature>
<feature type="helix" evidence="15">
    <location>
        <begin position="493"/>
        <end position="498"/>
    </location>
</feature>
<feature type="helix" evidence="15">
    <location>
        <begin position="500"/>
        <end position="516"/>
    </location>
</feature>
<feature type="helix" evidence="15">
    <location>
        <begin position="520"/>
        <end position="527"/>
    </location>
</feature>
<organism>
    <name type="scientific">Lentzea aerocolonigenes</name>
    <name type="common">Lechevalieria aerocolonigenes</name>
    <name type="synonym">Saccharothrix aerocolonigenes</name>
    <dbReference type="NCBI Taxonomy" id="68170"/>
    <lineage>
        <taxon>Bacteria</taxon>
        <taxon>Bacillati</taxon>
        <taxon>Actinomycetota</taxon>
        <taxon>Actinomycetes</taxon>
        <taxon>Pseudonocardiales</taxon>
        <taxon>Pseudonocardiaceae</taxon>
        <taxon>Lentzea</taxon>
    </lineage>
</organism>
<reference key="1">
    <citation type="journal article" date="2002" name="Chem. Biol.">
        <title>The biosynthetic gene cluster for the antitumor rebeccamycin: characterization and generation of indolocarbazole derivatives.</title>
        <authorList>
            <person name="Sanchez C."/>
            <person name="Butovich I.A."/>
            <person name="Brana A.F."/>
            <person name="Rohr J."/>
            <person name="Mendez C."/>
            <person name="Salas J.A."/>
        </authorList>
    </citation>
    <scope>NUCLEOTIDE SEQUENCE [GENOMIC DNA]</scope>
    <scope>FUNCTION</scope>
    <source>
        <strain>ATCC 39243 / DSM 44217 / BCRC 13729 / KCTC 9384</strain>
    </source>
</reference>
<reference key="2">
    <citation type="journal article" date="2002" name="J. Antibiot.">
        <title>Cloning of the staurosporine biosynthetic gene cluster from Streptomyces sp. TP-A0274 and its heterologous expression in Streptomyces lividans.</title>
        <authorList>
            <person name="Onaka H."/>
            <person name="Taniguchi S."/>
            <person name="Igarashi Y."/>
            <person name="Furumai T."/>
        </authorList>
    </citation>
    <scope>NUCLEOTIDE SEQUENCE [GENOMIC DNA]</scope>
</reference>
<reference key="3">
    <citation type="submission" date="2002-08" db="EMBL/GenBank/DDBJ databases">
        <title>The Biosynthesis of Indolocarbazoles in a Heterologous E. coli Host.</title>
        <authorList>
            <person name="Hyun C.-G."/>
            <person name="Bililign T."/>
            <person name="Liao J."/>
            <person name="Thorson J.S."/>
        </authorList>
    </citation>
    <scope>NUCLEOTIDE SEQUENCE [GENOMIC DNA]</scope>
</reference>
<reference key="4">
    <citation type="journal article" date="2003" name="Biosci. Biotechnol. Biochem.">
        <title>Characterization of the biosynthetic gene cluster of rebeccamycin from Lechevalieria aerocolonigenes ATCC 39243.</title>
        <authorList>
            <person name="Onaka H."/>
            <person name="Taniguchi S."/>
            <person name="Igarashi Y."/>
            <person name="Furumai T."/>
        </authorList>
    </citation>
    <scope>NUCLEOTIDE SEQUENCE [GENOMIC DNA]</scope>
</reference>
<reference key="5">
    <citation type="journal article" date="2003" name="J. Antibiot.">
        <title>pTOYAMAcos, pTYM18, and pTYM19, actinomycete-Escherichia coli integrating vectors for heterologous gene expression.</title>
        <authorList>
            <person name="Onaka H."/>
            <person name="Taniguchi S."/>
            <person name="Ikeda H."/>
            <person name="Igarashi Y."/>
            <person name="Furumai T."/>
        </authorList>
    </citation>
    <scope>NUCLEOTIDE SEQUENCE [GENOMIC DNA]</scope>
</reference>
<reference key="6">
    <citation type="journal article" date="2005" name="J. Bacteriol.">
        <title>Molecular analysis of the rebeccamycin L-amino acid oxidase from Lechevalieria aerocolonigenes ATCC 39243.</title>
        <authorList>
            <person name="Nishizawa T."/>
            <person name="Aldrich C.C."/>
            <person name="Sherman D.H."/>
        </authorList>
    </citation>
    <scope>NUCLEOTIDE SEQUENCE [GENOMIC DNA]</scope>
</reference>
<reference key="7">
    <citation type="journal article" date="2006" name="Nihon Hosenkin Gakkaishi">
        <title>Biosynthesis of heterocyclic antibiotics in actinomycetes and an approach to synthesize the natural compounds.</title>
        <authorList>
            <person name="Onaka H."/>
        </authorList>
    </citation>
    <scope>NUCLEOTIDE SEQUENCE [GENOMIC DNA]</scope>
</reference>
<reference key="8">
    <citation type="journal article" date="2006" name="Tetrahedron Lett.">
        <title>Direct formation of chromopyrrolic acid from indole-3-pyruvic acid by StaD, a novel hemoprotein in indolocarbazole biosynthesis.</title>
        <authorList>
            <person name="Asamizu S."/>
            <person name="Kato Y."/>
            <person name="Igarashi Y."/>
            <person name="Furumai T."/>
            <person name="Onaka H."/>
        </authorList>
    </citation>
    <scope>NUCLEOTIDE SEQUENCE [GENOMIC DNA]</scope>
</reference>
<reference key="9">
    <citation type="journal article" date="2005" name="Proc. Natl. Acad. Sci. U.S.A.">
        <title>Robust in vitro activity of RebF and RebH, a two-component reductase/halogenase, generating 7-chlorotryptophan during rebeccamycin biosynthesis.</title>
        <authorList>
            <person name="Yeh E."/>
            <person name="Garneau S."/>
            <person name="Walsh C.T."/>
        </authorList>
    </citation>
    <scope>FUNCTION</scope>
    <scope>CATALYTIC ACTIVITY</scope>
    <scope>SUBSTRATE SPECIFICITY</scope>
    <scope>BIOPHYSICOCHEMICAL PROPERTIES</scope>
</reference>
<reference key="10">
    <citation type="journal article" date="2006" name="Biochemistry">
        <title>Flavin redox chemistry precedes substrate chlorination during the reaction of the flavin-dependent halogenase RebH.</title>
        <authorList>
            <person name="Yeh E."/>
            <person name="Cole L.J."/>
            <person name="Barr E.W."/>
            <person name="Bollinger J.M. Jr."/>
            <person name="Ballou D.P."/>
            <person name="Walsh C.T."/>
        </authorList>
    </citation>
    <scope>REACTION MECHANISM</scope>
</reference>
<reference evidence="10 13 14" key="11">
    <citation type="journal article" date="2007" name="Biochemistry">
        <title>Chlorination by a long-lived intermediate in the mechanism of flavin-dependent halogenases.</title>
        <authorList>
            <person name="Yeh E."/>
            <person name="Blasiak L.C."/>
            <person name="Koglin A."/>
            <person name="Drennan C.L."/>
            <person name="Walsh C.T."/>
        </authorList>
    </citation>
    <scope>X-RAY CRYSTALLOGRAPHY (2.08 ANGSTROMS) IN COMPLEXES WITH FAD AND TRYPTOPHAN</scope>
    <scope>FUNCTION</scope>
    <scope>CATALYTIC ACTIVITY</scope>
    <scope>ACTIVE SITE</scope>
    <scope>MUTAGENESIS OF LYS-79</scope>
    <scope>PROPOSED REACTION MECHANISM</scope>
    <scope>SUBUNIT</scope>
</reference>
<reference evidence="11 12" key="12">
    <citation type="journal article" date="2008" name="Proteins">
        <title>The structure of flavin-dependent tryptophan 7-halogenase RebH.</title>
        <authorList>
            <person name="Bitto E."/>
            <person name="Huang Y."/>
            <person name="Bingman C.A."/>
            <person name="Singh S."/>
            <person name="Thorson J.S."/>
            <person name="Phillips G.N."/>
        </authorList>
    </citation>
    <scope>X-RAY CRYSTALLOGRAPHY (2.15 ANGSTROMS) IN COMPLEX WITH FAD; CHLORIDE AND TRYPTOPHAN</scope>
    <scope>SUBUNIT</scope>
</reference>
<name>TRP7H_LENAE</name>
<protein>
    <recommendedName>
        <fullName evidence="8">Tryptophan 7-halogenase RebH</fullName>
        <ecNumber evidence="3 5">1.14.19.9</ecNumber>
    </recommendedName>
    <alternativeName>
        <fullName evidence="7">FADH(2)-dependent halogenase</fullName>
    </alternativeName>
    <alternativeName>
        <fullName>Flavin-dependent tryptophan halogenase RebH</fullName>
    </alternativeName>
</protein>
<comment type="function">
    <text evidence="2 3 5">Involved in the biosynthesis of the indolocarbazole antitumor agent rebeccamycin (PubMed:11983340, PubMed:15743914). Catalyzes the chlorination of tryptophan (Trp) at C7 position to yield 7-chlorotryptophan (PubMed:15743914, PubMed:17260957). It is also able to use bromide ions to generate monobrominated Trp (PubMed:15743914).</text>
</comment>
<comment type="catalytic activity">
    <reaction evidence="3 5">
        <text>L-tryptophan + FADH2 + chloride + O2 = 7-chloro-L-tryptophan + FAD + 2 H2O</text>
        <dbReference type="Rhea" id="RHEA:26494"/>
        <dbReference type="ChEBI" id="CHEBI:15377"/>
        <dbReference type="ChEBI" id="CHEBI:15379"/>
        <dbReference type="ChEBI" id="CHEBI:17996"/>
        <dbReference type="ChEBI" id="CHEBI:57692"/>
        <dbReference type="ChEBI" id="CHEBI:57912"/>
        <dbReference type="ChEBI" id="CHEBI:58307"/>
        <dbReference type="ChEBI" id="CHEBI:58713"/>
        <dbReference type="EC" id="1.14.19.9"/>
    </reaction>
    <physiologicalReaction direction="left-to-right" evidence="3">
        <dbReference type="Rhea" id="RHEA:26495"/>
    </physiologicalReaction>
</comment>
<comment type="biophysicochemical properties">
    <kinetics>
        <KM evidence="3">2 uM for tryptophan (with FAD)</KM>
        <text evidence="3">kcat for tryptophan is 1.4 min(-1).</text>
    </kinetics>
</comment>
<comment type="subunit">
    <text evidence="5 6">Homodimer.</text>
</comment>
<comment type="miscellaneous">
    <text evidence="4 5 9">The reaction between FADH(2), Cl(-) and O(2) produces hypochlorous acid (HOCl), a powerful oxidant (PubMed:16784243, PubMed:17260957). HOCl is proposed to react with an active site lysine to generate a chloramine intermediate, which chlorinates the substrate (PubMed:17260957). However, studies with the tryptophan 6-halogenase ThaL (AC A1E280) suggest another model: the conserved lysine would not form a chloramine intermediate, but it may protonate HOCl during the halogenation reaction (Probable).</text>
</comment>
<comment type="similarity">
    <text evidence="9">Belongs to the flavin-dependent halogenase family. Bacterial tryptophan halogenase subfamily.</text>
</comment>
<evidence type="ECO:0000250" key="1">
    <source>
        <dbReference type="UniProtKB" id="P95480"/>
    </source>
</evidence>
<evidence type="ECO:0000269" key="2">
    <source>
    </source>
</evidence>
<evidence type="ECO:0000269" key="3">
    <source>
    </source>
</evidence>
<evidence type="ECO:0000269" key="4">
    <source>
    </source>
</evidence>
<evidence type="ECO:0000269" key="5">
    <source>
    </source>
</evidence>
<evidence type="ECO:0000269" key="6">
    <source>
    </source>
</evidence>
<evidence type="ECO:0000303" key="7">
    <source>
    </source>
</evidence>
<evidence type="ECO:0000303" key="8">
    <source>
    </source>
</evidence>
<evidence type="ECO:0000305" key="9"/>
<evidence type="ECO:0007744" key="10">
    <source>
        <dbReference type="PDB" id="2E4G"/>
    </source>
</evidence>
<evidence type="ECO:0007744" key="11">
    <source>
        <dbReference type="PDB" id="2O9Z"/>
    </source>
</evidence>
<evidence type="ECO:0007744" key="12">
    <source>
        <dbReference type="PDB" id="2OA1"/>
    </source>
</evidence>
<evidence type="ECO:0007744" key="13">
    <source>
        <dbReference type="PDB" id="2OAL"/>
    </source>
</evidence>
<evidence type="ECO:0007744" key="14">
    <source>
        <dbReference type="PDB" id="2OAM"/>
    </source>
</evidence>
<evidence type="ECO:0007829" key="15">
    <source>
        <dbReference type="PDB" id="2E4G"/>
    </source>
</evidence>
<evidence type="ECO:0007829" key="16">
    <source>
        <dbReference type="PDB" id="2OAL"/>
    </source>
</evidence>
<evidence type="ECO:0007829" key="17">
    <source>
        <dbReference type="PDB" id="4LU6"/>
    </source>
</evidence>
<proteinExistence type="evidence at protein level"/>